<feature type="chain" id="PRO_0000281952" description="Putative F-box/LRR-repeat protein At3g44090">
    <location>
        <begin position="1"/>
        <end position="449"/>
    </location>
</feature>
<feature type="domain" description="F-box" evidence="1">
    <location>
        <begin position="23"/>
        <end position="77"/>
    </location>
</feature>
<feature type="repeat" description="LRR 1">
    <location>
        <begin position="133"/>
        <end position="163"/>
    </location>
</feature>
<feature type="repeat" description="LRR 2">
    <location>
        <begin position="186"/>
        <end position="212"/>
    </location>
</feature>
<feature type="repeat" description="LRR 3">
    <location>
        <begin position="214"/>
        <end position="231"/>
    </location>
</feature>
<feature type="repeat" description="LRR 4">
    <location>
        <begin position="247"/>
        <end position="278"/>
    </location>
</feature>
<feature type="repeat" description="LRR 5">
    <location>
        <begin position="286"/>
        <end position="311"/>
    </location>
</feature>
<feature type="repeat" description="LRR 6">
    <location>
        <begin position="320"/>
        <end position="345"/>
    </location>
</feature>
<keyword id="KW-0433">Leucine-rich repeat</keyword>
<keyword id="KW-1185">Reference proteome</keyword>
<keyword id="KW-0677">Repeat</keyword>
<organism>
    <name type="scientific">Arabidopsis thaliana</name>
    <name type="common">Mouse-ear cress</name>
    <dbReference type="NCBI Taxonomy" id="3702"/>
    <lineage>
        <taxon>Eukaryota</taxon>
        <taxon>Viridiplantae</taxon>
        <taxon>Streptophyta</taxon>
        <taxon>Embryophyta</taxon>
        <taxon>Tracheophyta</taxon>
        <taxon>Spermatophyta</taxon>
        <taxon>Magnoliopsida</taxon>
        <taxon>eudicotyledons</taxon>
        <taxon>Gunneridae</taxon>
        <taxon>Pentapetalae</taxon>
        <taxon>rosids</taxon>
        <taxon>malvids</taxon>
        <taxon>Brassicales</taxon>
        <taxon>Brassicaceae</taxon>
        <taxon>Camelineae</taxon>
        <taxon>Arabidopsis</taxon>
    </lineage>
</organism>
<name>FBL51_ARATH</name>
<proteinExistence type="predicted"/>
<protein>
    <recommendedName>
        <fullName>Putative F-box/LRR-repeat protein At3g44090</fullName>
    </recommendedName>
</protein>
<evidence type="ECO:0000255" key="1">
    <source>
        <dbReference type="PROSITE-ProRule" id="PRU00080"/>
    </source>
</evidence>
<sequence>MNNSKSNLLDTEHGDKVAEQMNLASMDCLPDDLLVQILYFLPTKEAISTSLLSKRWRTLYSLVHNLDLDDYIFWHHEDGYNQYFSNDIQKSFEEFMERTLALLGGGHIKTFSLISDEIYRFDHVVDSIRPWLYYNLQKDSLWQFGFPYKVFTSTKLVKLSLGTRLACPRIPQDTSLPVLKVLLLEYIWFEDNQLSDVFLAACPALEDLTIHHMFRPFLISSKNLKKLSVTINFSYYVDRSTILTLDTPNVVDLYYSDFPRPIAPHCHLDSLAKVELDLHSLEDDSRQVQNDADVKNLISEIRNVKTLHLTYSAVELMLSSKKRDWKVLPLLLERSPNLKTLVLSGLNRYTFGRRHRFVGIQIPSSNKIKMLSIKQYQGSATELKHISHLLLKMECLELVKVYLATEMDDLKKMQLTEDVVKLPAASSKIVEKLKAFGAKAVLERVSFLD</sequence>
<accession>Q9LXQ3</accession>
<reference key="1">
    <citation type="journal article" date="2000" name="Nature">
        <title>Sequence and analysis of chromosome 3 of the plant Arabidopsis thaliana.</title>
        <authorList>
            <person name="Salanoubat M."/>
            <person name="Lemcke K."/>
            <person name="Rieger M."/>
            <person name="Ansorge W."/>
            <person name="Unseld M."/>
            <person name="Fartmann B."/>
            <person name="Valle G."/>
            <person name="Bloecker H."/>
            <person name="Perez-Alonso M."/>
            <person name="Obermaier B."/>
            <person name="Delseny M."/>
            <person name="Boutry M."/>
            <person name="Grivell L.A."/>
            <person name="Mache R."/>
            <person name="Puigdomenech P."/>
            <person name="De Simone V."/>
            <person name="Choisne N."/>
            <person name="Artiguenave F."/>
            <person name="Robert C."/>
            <person name="Brottier P."/>
            <person name="Wincker P."/>
            <person name="Cattolico L."/>
            <person name="Weissenbach J."/>
            <person name="Saurin W."/>
            <person name="Quetier F."/>
            <person name="Schaefer M."/>
            <person name="Mueller-Auer S."/>
            <person name="Gabel C."/>
            <person name="Fuchs M."/>
            <person name="Benes V."/>
            <person name="Wurmbach E."/>
            <person name="Drzonek H."/>
            <person name="Erfle H."/>
            <person name="Jordan N."/>
            <person name="Bangert S."/>
            <person name="Wiedelmann R."/>
            <person name="Kranz H."/>
            <person name="Voss H."/>
            <person name="Holland R."/>
            <person name="Brandt P."/>
            <person name="Nyakatura G."/>
            <person name="Vezzi A."/>
            <person name="D'Angelo M."/>
            <person name="Pallavicini A."/>
            <person name="Toppo S."/>
            <person name="Simionati B."/>
            <person name="Conrad A."/>
            <person name="Hornischer K."/>
            <person name="Kauer G."/>
            <person name="Loehnert T.-H."/>
            <person name="Nordsiek G."/>
            <person name="Reichelt J."/>
            <person name="Scharfe M."/>
            <person name="Schoen O."/>
            <person name="Bargues M."/>
            <person name="Terol J."/>
            <person name="Climent J."/>
            <person name="Navarro P."/>
            <person name="Collado C."/>
            <person name="Perez-Perez A."/>
            <person name="Ottenwaelder B."/>
            <person name="Duchemin D."/>
            <person name="Cooke R."/>
            <person name="Laudie M."/>
            <person name="Berger-Llauro C."/>
            <person name="Purnelle B."/>
            <person name="Masuy D."/>
            <person name="de Haan M."/>
            <person name="Maarse A.C."/>
            <person name="Alcaraz J.-P."/>
            <person name="Cottet A."/>
            <person name="Casacuberta E."/>
            <person name="Monfort A."/>
            <person name="Argiriou A."/>
            <person name="Flores M."/>
            <person name="Liguori R."/>
            <person name="Vitale D."/>
            <person name="Mannhaupt G."/>
            <person name="Haase D."/>
            <person name="Schoof H."/>
            <person name="Rudd S."/>
            <person name="Zaccaria P."/>
            <person name="Mewes H.-W."/>
            <person name="Mayer K.F.X."/>
            <person name="Kaul S."/>
            <person name="Town C.D."/>
            <person name="Koo H.L."/>
            <person name="Tallon L.J."/>
            <person name="Jenkins J."/>
            <person name="Rooney T."/>
            <person name="Rizzo M."/>
            <person name="Walts A."/>
            <person name="Utterback T."/>
            <person name="Fujii C.Y."/>
            <person name="Shea T.P."/>
            <person name="Creasy T.H."/>
            <person name="Haas B."/>
            <person name="Maiti R."/>
            <person name="Wu D."/>
            <person name="Peterson J."/>
            <person name="Van Aken S."/>
            <person name="Pai G."/>
            <person name="Militscher J."/>
            <person name="Sellers P."/>
            <person name="Gill J.E."/>
            <person name="Feldblyum T.V."/>
            <person name="Preuss D."/>
            <person name="Lin X."/>
            <person name="Nierman W.C."/>
            <person name="Salzberg S.L."/>
            <person name="White O."/>
            <person name="Venter J.C."/>
            <person name="Fraser C.M."/>
            <person name="Kaneko T."/>
            <person name="Nakamura Y."/>
            <person name="Sato S."/>
            <person name="Kato T."/>
            <person name="Asamizu E."/>
            <person name="Sasamoto S."/>
            <person name="Kimura T."/>
            <person name="Idesawa K."/>
            <person name="Kawashima K."/>
            <person name="Kishida Y."/>
            <person name="Kiyokawa C."/>
            <person name="Kohara M."/>
            <person name="Matsumoto M."/>
            <person name="Matsuno A."/>
            <person name="Muraki A."/>
            <person name="Nakayama S."/>
            <person name="Nakazaki N."/>
            <person name="Shinpo S."/>
            <person name="Takeuchi C."/>
            <person name="Wada T."/>
            <person name="Watanabe A."/>
            <person name="Yamada M."/>
            <person name="Yasuda M."/>
            <person name="Tabata S."/>
        </authorList>
    </citation>
    <scope>NUCLEOTIDE SEQUENCE [LARGE SCALE GENOMIC DNA]</scope>
    <source>
        <strain>cv. Columbia</strain>
    </source>
</reference>
<reference key="2">
    <citation type="journal article" date="2017" name="Plant J.">
        <title>Araport11: a complete reannotation of the Arabidopsis thaliana reference genome.</title>
        <authorList>
            <person name="Cheng C.Y."/>
            <person name="Krishnakumar V."/>
            <person name="Chan A.P."/>
            <person name="Thibaud-Nissen F."/>
            <person name="Schobel S."/>
            <person name="Town C.D."/>
        </authorList>
    </citation>
    <scope>GENOME REANNOTATION</scope>
    <source>
        <strain>cv. Columbia</strain>
    </source>
</reference>
<dbReference type="EMBL" id="AL353814">
    <property type="protein sequence ID" value="CAB88417.1"/>
    <property type="molecule type" value="Genomic_DNA"/>
</dbReference>
<dbReference type="EMBL" id="CP002686">
    <property type="protein sequence ID" value="AEE77860.1"/>
    <property type="molecule type" value="Genomic_DNA"/>
</dbReference>
<dbReference type="PIR" id="T49125">
    <property type="entry name" value="T49125"/>
</dbReference>
<dbReference type="RefSeq" id="NP_189995.1">
    <property type="nucleotide sequence ID" value="NM_114277.1"/>
</dbReference>
<dbReference type="FunCoup" id="Q9LXQ3">
    <property type="interactions" value="3"/>
</dbReference>
<dbReference type="iPTMnet" id="Q9LXQ3"/>
<dbReference type="PaxDb" id="3702-AT3G44090.1"/>
<dbReference type="EnsemblPlants" id="AT3G44090.1">
    <property type="protein sequence ID" value="AT3G44090.1"/>
    <property type="gene ID" value="AT3G44090"/>
</dbReference>
<dbReference type="GeneID" id="823527"/>
<dbReference type="Gramene" id="AT3G44090.1">
    <property type="protein sequence ID" value="AT3G44090.1"/>
    <property type="gene ID" value="AT3G44090"/>
</dbReference>
<dbReference type="KEGG" id="ath:AT3G44090"/>
<dbReference type="Araport" id="AT3G44090"/>
<dbReference type="TAIR" id="AT3G44090"/>
<dbReference type="HOGENOM" id="CLU_010721_7_0_1"/>
<dbReference type="InParanoid" id="Q9LXQ3"/>
<dbReference type="PhylomeDB" id="Q9LXQ3"/>
<dbReference type="PRO" id="PR:Q9LXQ3"/>
<dbReference type="Proteomes" id="UP000006548">
    <property type="component" value="Chromosome 3"/>
</dbReference>
<dbReference type="ExpressionAtlas" id="Q9LXQ3">
    <property type="expression patterns" value="baseline"/>
</dbReference>
<dbReference type="CDD" id="cd22160">
    <property type="entry name" value="F-box_AtFBL13-like"/>
    <property type="match status" value="1"/>
</dbReference>
<dbReference type="Gene3D" id="1.20.1280.50">
    <property type="match status" value="1"/>
</dbReference>
<dbReference type="Gene3D" id="3.80.10.10">
    <property type="entry name" value="Ribonuclease Inhibitor"/>
    <property type="match status" value="1"/>
</dbReference>
<dbReference type="InterPro" id="IPR036047">
    <property type="entry name" value="F-box-like_dom_sf"/>
</dbReference>
<dbReference type="InterPro" id="IPR053781">
    <property type="entry name" value="F-box_AtFBL13-like"/>
</dbReference>
<dbReference type="InterPro" id="IPR001810">
    <property type="entry name" value="F-box_dom"/>
</dbReference>
<dbReference type="InterPro" id="IPR006566">
    <property type="entry name" value="FBD"/>
</dbReference>
<dbReference type="InterPro" id="IPR055294">
    <property type="entry name" value="FBL60-like"/>
</dbReference>
<dbReference type="InterPro" id="IPR032675">
    <property type="entry name" value="LRR_dom_sf"/>
</dbReference>
<dbReference type="InterPro" id="IPR055411">
    <property type="entry name" value="LRR_FXL15/At3g58940/PEG3-like"/>
</dbReference>
<dbReference type="PANTHER" id="PTHR31293">
    <property type="entry name" value="RNI-LIKE SUPERFAMILY PROTEIN"/>
    <property type="match status" value="1"/>
</dbReference>
<dbReference type="PANTHER" id="PTHR31293:SF12">
    <property type="entry name" value="RNI-LIKE SUPERFAMILY PROTEIN"/>
    <property type="match status" value="1"/>
</dbReference>
<dbReference type="Pfam" id="PF00646">
    <property type="entry name" value="F-box"/>
    <property type="match status" value="1"/>
</dbReference>
<dbReference type="Pfam" id="PF24758">
    <property type="entry name" value="LRR_At5g56370"/>
    <property type="match status" value="1"/>
</dbReference>
<dbReference type="SMART" id="SM00579">
    <property type="entry name" value="FBD"/>
    <property type="match status" value="1"/>
</dbReference>
<dbReference type="SUPFAM" id="SSF81383">
    <property type="entry name" value="F-box domain"/>
    <property type="match status" value="1"/>
</dbReference>
<dbReference type="SUPFAM" id="SSF52047">
    <property type="entry name" value="RNI-like"/>
    <property type="match status" value="1"/>
</dbReference>
<dbReference type="PROSITE" id="PS50181">
    <property type="entry name" value="FBOX"/>
    <property type="match status" value="1"/>
</dbReference>
<gene>
    <name type="ordered locus">At3g44090</name>
    <name type="ORF">F26G5.40</name>
</gene>